<comment type="function">
    <text>The insulin-like growth factors, isolated from plasma, are structurally and functionally related to insulin but have a much higher growth-promoting activity.</text>
</comment>
<comment type="subcellular location">
    <subcellularLocation>
        <location>Secreted</location>
    </subcellularLocation>
</comment>
<comment type="similarity">
    <text evidence="2">Belongs to the insulin family.</text>
</comment>
<accession>P22618</accession>
<proteinExistence type="evidence at transcript level"/>
<dbReference type="EMBL" id="M57735">
    <property type="protein sequence ID" value="AAA49265.1"/>
    <property type="molecule type" value="mRNA"/>
</dbReference>
<dbReference type="PIR" id="A38612">
    <property type="entry name" value="A38612"/>
</dbReference>
<dbReference type="GO" id="GO:0005615">
    <property type="term" value="C:extracellular space"/>
    <property type="evidence" value="ECO:0007669"/>
    <property type="project" value="InterPro"/>
</dbReference>
<dbReference type="GO" id="GO:0008083">
    <property type="term" value="F:growth factor activity"/>
    <property type="evidence" value="ECO:0007669"/>
    <property type="project" value="UniProtKB-KW"/>
</dbReference>
<dbReference type="GO" id="GO:0005179">
    <property type="term" value="F:hormone activity"/>
    <property type="evidence" value="ECO:0007669"/>
    <property type="project" value="InterPro"/>
</dbReference>
<dbReference type="GO" id="GO:0005159">
    <property type="term" value="F:insulin-like growth factor receptor binding"/>
    <property type="evidence" value="ECO:0007669"/>
    <property type="project" value="TreeGrafter"/>
</dbReference>
<dbReference type="GO" id="GO:0043539">
    <property type="term" value="F:protein serine/threonine kinase activator activity"/>
    <property type="evidence" value="ECO:0007669"/>
    <property type="project" value="TreeGrafter"/>
</dbReference>
<dbReference type="GO" id="GO:0042104">
    <property type="term" value="P:positive regulation of activated T cell proliferation"/>
    <property type="evidence" value="ECO:0007669"/>
    <property type="project" value="TreeGrafter"/>
</dbReference>
<dbReference type="GO" id="GO:0051781">
    <property type="term" value="P:positive regulation of cell division"/>
    <property type="evidence" value="ECO:0007669"/>
    <property type="project" value="UniProtKB-KW"/>
</dbReference>
<dbReference type="GO" id="GO:0046628">
    <property type="term" value="P:positive regulation of insulin receptor signaling pathway"/>
    <property type="evidence" value="ECO:0007669"/>
    <property type="project" value="TreeGrafter"/>
</dbReference>
<dbReference type="GO" id="GO:0043410">
    <property type="term" value="P:positive regulation of MAPK cascade"/>
    <property type="evidence" value="ECO:0007669"/>
    <property type="project" value="TreeGrafter"/>
</dbReference>
<dbReference type="GO" id="GO:0045944">
    <property type="term" value="P:positive regulation of transcription by RNA polymerase II"/>
    <property type="evidence" value="ECO:0007669"/>
    <property type="project" value="TreeGrafter"/>
</dbReference>
<dbReference type="GO" id="GO:1905564">
    <property type="term" value="P:positive regulation of vascular endothelial cell proliferation"/>
    <property type="evidence" value="ECO:0007669"/>
    <property type="project" value="TreeGrafter"/>
</dbReference>
<dbReference type="GO" id="GO:0051147">
    <property type="term" value="P:regulation of muscle cell differentiation"/>
    <property type="evidence" value="ECO:0007669"/>
    <property type="project" value="TreeGrafter"/>
</dbReference>
<dbReference type="CDD" id="cd04368">
    <property type="entry name" value="IlGF"/>
    <property type="match status" value="1"/>
</dbReference>
<dbReference type="FunFam" id="1.10.100.10:FF:000001">
    <property type="entry name" value="insulin-like growth factor I isoform X1"/>
    <property type="match status" value="1"/>
</dbReference>
<dbReference type="Gene3D" id="1.10.100.10">
    <property type="entry name" value="Insulin-like"/>
    <property type="match status" value="1"/>
</dbReference>
<dbReference type="InterPro" id="IPR016179">
    <property type="entry name" value="Insulin-like"/>
</dbReference>
<dbReference type="InterPro" id="IPR022350">
    <property type="entry name" value="Insulin-like_growth_factor"/>
</dbReference>
<dbReference type="InterPro" id="IPR036438">
    <property type="entry name" value="Insulin-like_sf"/>
</dbReference>
<dbReference type="InterPro" id="IPR022353">
    <property type="entry name" value="Insulin_CS"/>
</dbReference>
<dbReference type="InterPro" id="IPR022352">
    <property type="entry name" value="Insulin_family"/>
</dbReference>
<dbReference type="PANTHER" id="PTHR46886">
    <property type="entry name" value="INSULIN-LIKE GROWTH FACTOR II"/>
    <property type="match status" value="1"/>
</dbReference>
<dbReference type="PANTHER" id="PTHR46886:SF1">
    <property type="entry name" value="INSULIN-LIKE GROWTH FACTOR II"/>
    <property type="match status" value="1"/>
</dbReference>
<dbReference type="Pfam" id="PF00049">
    <property type="entry name" value="Insulin"/>
    <property type="match status" value="1"/>
</dbReference>
<dbReference type="PRINTS" id="PR02002">
    <property type="entry name" value="INSLNLIKEGF"/>
</dbReference>
<dbReference type="PRINTS" id="PR00276">
    <property type="entry name" value="INSULINFAMLY"/>
</dbReference>
<dbReference type="SMART" id="SM00078">
    <property type="entry name" value="IlGF"/>
    <property type="match status" value="1"/>
</dbReference>
<dbReference type="SUPFAM" id="SSF56994">
    <property type="entry name" value="Insulin-like"/>
    <property type="match status" value="1"/>
</dbReference>
<dbReference type="PROSITE" id="PS00262">
    <property type="entry name" value="INSULIN"/>
    <property type="match status" value="1"/>
</dbReference>
<organism>
    <name type="scientific">Myxine glutinosa</name>
    <name type="common">Atlantic hagfish</name>
    <dbReference type="NCBI Taxonomy" id="7769"/>
    <lineage>
        <taxon>Eukaryota</taxon>
        <taxon>Metazoa</taxon>
        <taxon>Chordata</taxon>
        <taxon>Craniata</taxon>
        <taxon>Vertebrata</taxon>
        <taxon>Cyclostomata</taxon>
        <taxon>Myxini</taxon>
        <taxon>Myxiniformes</taxon>
        <taxon>Myxinidae</taxon>
        <taxon>Myxininae</taxon>
        <taxon>Myxine</taxon>
    </lineage>
</organism>
<keyword id="KW-0339">Growth factor</keyword>
<keyword id="KW-0497">Mitogen</keyword>
<keyword id="KW-0964">Secreted</keyword>
<keyword id="KW-0732">Signal</keyword>
<evidence type="ECO:0000256" key="1">
    <source>
        <dbReference type="SAM" id="MobiDB-lite"/>
    </source>
</evidence>
<evidence type="ECO:0000305" key="2"/>
<reference key="1">
    <citation type="journal article" date="1991" name="J. Biol. Chem.">
        <title>Evolution of the insulin gene superfamily. Sequence of a preproinsulin-like growth factor cDNA from the Atlantic hagfish.</title>
        <authorList>
            <person name="Nagamatsu S."/>
            <person name="Chan S.J."/>
            <person name="Falkmer S."/>
            <person name="Steiner D.F."/>
        </authorList>
    </citation>
    <scope>NUCLEOTIDE SEQUENCE [MRNA]</scope>
</reference>
<sequence>YIRRVRQGSIYSLLVESQQWCKLTLTLLLLLALLTRCTLSETLCGSELVDTLQFVCDDRGFFFVPQHVPPRRGAHRRSRARKGIVEECCFKGCSLRLLEMYCARPSKAERDVARPRQRPHRASQHSRRGSQSRGRGRSR</sequence>
<name>IGF_MYXGL</name>
<feature type="signal peptide">
    <location>
        <begin position="1" status="less than"/>
        <end position="38"/>
    </location>
</feature>
<feature type="chain" id="PRO_0000015733" description="Insulin-like growth factor">
    <location>
        <begin position="39"/>
        <end position="139"/>
    </location>
</feature>
<feature type="region of interest" description="B">
    <location>
        <begin position="39"/>
        <end position="67"/>
    </location>
</feature>
<feature type="region of interest" description="C">
    <location>
        <begin position="68"/>
        <end position="82"/>
    </location>
</feature>
<feature type="region of interest" description="A">
    <location>
        <begin position="83"/>
        <end position="103"/>
    </location>
</feature>
<feature type="region of interest" description="D">
    <location>
        <begin position="104"/>
        <end position="113"/>
    </location>
</feature>
<feature type="region of interest" description="Disordered" evidence="1">
    <location>
        <begin position="108"/>
        <end position="139"/>
    </location>
</feature>
<feature type="region of interest" description="E">
    <location>
        <begin position="114"/>
        <end position="139"/>
    </location>
</feature>
<feature type="compositionally biased region" description="Basic residues" evidence="1">
    <location>
        <begin position="115"/>
        <end position="139"/>
    </location>
</feature>
<feature type="non-terminal residue">
    <location>
        <position position="1"/>
    </location>
</feature>
<protein>
    <recommendedName>
        <fullName>Insulin-like growth factor</fullName>
        <shortName>IGF</shortName>
    </recommendedName>
</protein>